<reference key="1">
    <citation type="journal article" date="2009" name="Appl. Environ. Microbiol.">
        <title>Novel features of the polysaccharide-digesting gliding bacterium Flavobacterium johnsoniae as revealed by genome sequence analysis.</title>
        <authorList>
            <person name="McBride M.J."/>
            <person name="Xie G."/>
            <person name="Martens E.C."/>
            <person name="Lapidus A."/>
            <person name="Henrissat B."/>
            <person name="Rhodes R.G."/>
            <person name="Goltsman E."/>
            <person name="Wang W."/>
            <person name="Xu J."/>
            <person name="Hunnicutt D.W."/>
            <person name="Staroscik A.M."/>
            <person name="Hoover T.R."/>
            <person name="Cheng Y.Q."/>
            <person name="Stein J.L."/>
        </authorList>
    </citation>
    <scope>NUCLEOTIDE SEQUENCE [LARGE SCALE GENOMIC DNA]</scope>
    <source>
        <strain>ATCC 17061 / DSM 2064 / JCM 8514 / BCRC 14874 / CCUG 350202 / NBRC 14942 / NCIMB 11054 / UW101</strain>
    </source>
</reference>
<protein>
    <recommendedName>
        <fullName evidence="1">Ribosomal RNA small subunit methyltransferase G</fullName>
        <ecNumber evidence="1">2.1.1.-</ecNumber>
    </recommendedName>
    <alternativeName>
        <fullName evidence="1">16S rRNA 7-methylguanosine methyltransferase</fullName>
        <shortName evidence="1">16S rRNA m7G methyltransferase</shortName>
    </alternativeName>
</protein>
<proteinExistence type="inferred from homology"/>
<comment type="function">
    <text evidence="1">Specifically methylates the N7 position of a guanine in 16S rRNA.</text>
</comment>
<comment type="subcellular location">
    <subcellularLocation>
        <location evidence="1">Cytoplasm</location>
    </subcellularLocation>
</comment>
<comment type="similarity">
    <text evidence="1">Belongs to the methyltransferase superfamily. RNA methyltransferase RsmG family.</text>
</comment>
<sequence>MDEILKYFPNLTDLQIEQFQKLDFLYHNWNEKINVISRKDIDSLYTKHILHSLGIAKVMKFEPGTTVLDVGTGGGFPGIPLAILFPETRFYLIDVIAKKIKVVQGVVDALELKNVKAEQKRAELVKGDFDFIVSRAVTNMPDFVSWIKDKIKKQHKHKLKNGILYLKGGDLSEELKDFPAATLYDLSEIFEDEFFETKKVVHLPLKFKP</sequence>
<name>RSMG_FLAJ1</name>
<dbReference type="EC" id="2.1.1.-" evidence="1"/>
<dbReference type="EMBL" id="CP000685">
    <property type="protein sequence ID" value="ABQ04781.1"/>
    <property type="molecule type" value="Genomic_DNA"/>
</dbReference>
<dbReference type="RefSeq" id="WP_012023825.1">
    <property type="nucleotide sequence ID" value="NC_009441.1"/>
</dbReference>
<dbReference type="SMR" id="A5FJ42"/>
<dbReference type="STRING" id="376686.Fjoh_1749"/>
<dbReference type="KEGG" id="fjo:Fjoh_1749"/>
<dbReference type="eggNOG" id="COG0357">
    <property type="taxonomic scope" value="Bacteria"/>
</dbReference>
<dbReference type="HOGENOM" id="CLU_065341_2_2_10"/>
<dbReference type="OrthoDB" id="9808773at2"/>
<dbReference type="Proteomes" id="UP000006694">
    <property type="component" value="Chromosome"/>
</dbReference>
<dbReference type="GO" id="GO:0005829">
    <property type="term" value="C:cytosol"/>
    <property type="evidence" value="ECO:0007669"/>
    <property type="project" value="TreeGrafter"/>
</dbReference>
<dbReference type="GO" id="GO:0070043">
    <property type="term" value="F:rRNA (guanine-N7-)-methyltransferase activity"/>
    <property type="evidence" value="ECO:0007669"/>
    <property type="project" value="UniProtKB-UniRule"/>
</dbReference>
<dbReference type="CDD" id="cd02440">
    <property type="entry name" value="AdoMet_MTases"/>
    <property type="match status" value="1"/>
</dbReference>
<dbReference type="Gene3D" id="3.40.50.150">
    <property type="entry name" value="Vaccinia Virus protein VP39"/>
    <property type="match status" value="1"/>
</dbReference>
<dbReference type="HAMAP" id="MF_00074">
    <property type="entry name" value="16SrRNA_methyltr_G"/>
    <property type="match status" value="1"/>
</dbReference>
<dbReference type="InterPro" id="IPR003682">
    <property type="entry name" value="rRNA_ssu_MeTfrase_G"/>
</dbReference>
<dbReference type="InterPro" id="IPR029063">
    <property type="entry name" value="SAM-dependent_MTases_sf"/>
</dbReference>
<dbReference type="NCBIfam" id="TIGR00138">
    <property type="entry name" value="rsmG_gidB"/>
    <property type="match status" value="1"/>
</dbReference>
<dbReference type="PANTHER" id="PTHR31760">
    <property type="entry name" value="S-ADENOSYL-L-METHIONINE-DEPENDENT METHYLTRANSFERASES SUPERFAMILY PROTEIN"/>
    <property type="match status" value="1"/>
</dbReference>
<dbReference type="PANTHER" id="PTHR31760:SF0">
    <property type="entry name" value="S-ADENOSYL-L-METHIONINE-DEPENDENT METHYLTRANSFERASES SUPERFAMILY PROTEIN"/>
    <property type="match status" value="1"/>
</dbReference>
<dbReference type="Pfam" id="PF02527">
    <property type="entry name" value="GidB"/>
    <property type="match status" value="1"/>
</dbReference>
<dbReference type="PIRSF" id="PIRSF003078">
    <property type="entry name" value="GidB"/>
    <property type="match status" value="1"/>
</dbReference>
<dbReference type="SUPFAM" id="SSF53335">
    <property type="entry name" value="S-adenosyl-L-methionine-dependent methyltransferases"/>
    <property type="match status" value="1"/>
</dbReference>
<accession>A5FJ42</accession>
<keyword id="KW-0963">Cytoplasm</keyword>
<keyword id="KW-0489">Methyltransferase</keyword>
<keyword id="KW-0698">rRNA processing</keyword>
<keyword id="KW-0949">S-adenosyl-L-methionine</keyword>
<keyword id="KW-0808">Transferase</keyword>
<gene>
    <name evidence="1" type="primary">rsmG</name>
    <name type="ordered locus">Fjoh_1749</name>
</gene>
<feature type="chain" id="PRO_0000335351" description="Ribosomal RNA small subunit methyltransferase G">
    <location>
        <begin position="1"/>
        <end position="209"/>
    </location>
</feature>
<feature type="binding site" evidence="1">
    <location>
        <position position="71"/>
    </location>
    <ligand>
        <name>S-adenosyl-L-methionine</name>
        <dbReference type="ChEBI" id="CHEBI:59789"/>
    </ligand>
</feature>
<feature type="binding site" evidence="1">
    <location>
        <position position="76"/>
    </location>
    <ligand>
        <name>S-adenosyl-L-methionine</name>
        <dbReference type="ChEBI" id="CHEBI:59789"/>
    </ligand>
</feature>
<feature type="binding site" evidence="1">
    <location>
        <begin position="122"/>
        <end position="123"/>
    </location>
    <ligand>
        <name>S-adenosyl-L-methionine</name>
        <dbReference type="ChEBI" id="CHEBI:59789"/>
    </ligand>
</feature>
<feature type="binding site" evidence="1">
    <location>
        <position position="135"/>
    </location>
    <ligand>
        <name>S-adenosyl-L-methionine</name>
        <dbReference type="ChEBI" id="CHEBI:59789"/>
    </ligand>
</feature>
<evidence type="ECO:0000255" key="1">
    <source>
        <dbReference type="HAMAP-Rule" id="MF_00074"/>
    </source>
</evidence>
<organism>
    <name type="scientific">Flavobacterium johnsoniae (strain ATCC 17061 / DSM 2064 / JCM 8514 / BCRC 14874 / CCUG 350202 / NBRC 14942 / NCIMB 11054 / UW101)</name>
    <name type="common">Cytophaga johnsonae</name>
    <dbReference type="NCBI Taxonomy" id="376686"/>
    <lineage>
        <taxon>Bacteria</taxon>
        <taxon>Pseudomonadati</taxon>
        <taxon>Bacteroidota</taxon>
        <taxon>Flavobacteriia</taxon>
        <taxon>Flavobacteriales</taxon>
        <taxon>Flavobacteriaceae</taxon>
        <taxon>Flavobacterium</taxon>
    </lineage>
</organism>